<name>LRC59_XENTR</name>
<feature type="chain" id="PRO_0000235165" description="Leucine-rich repeat-containing protein 59">
    <location>
        <begin position="1"/>
        <end position="308"/>
    </location>
</feature>
<feature type="topological domain" description="Cytoplasmic" evidence="2">
    <location>
        <begin position="1"/>
        <end position="248"/>
    </location>
</feature>
<feature type="transmembrane region" description="Helical" evidence="2">
    <location>
        <begin position="249"/>
        <end position="269"/>
    </location>
</feature>
<feature type="topological domain" description="Lumenal" evidence="2">
    <location>
        <begin position="270"/>
        <end position="308"/>
    </location>
</feature>
<feature type="repeat" description="LRR 1">
    <location>
        <begin position="10"/>
        <end position="31"/>
    </location>
</feature>
<feature type="repeat" description="LRR 2">
    <location>
        <begin position="40"/>
        <end position="61"/>
    </location>
</feature>
<feature type="repeat" description="LRR 3">
    <location>
        <begin position="63"/>
        <end position="84"/>
    </location>
</feature>
<feature type="repeat" description="LRR 4">
    <location>
        <begin position="86"/>
        <end position="107"/>
    </location>
</feature>
<feature type="repeat" description="LRR 5">
    <location>
        <begin position="109"/>
        <end position="128"/>
    </location>
</feature>
<feature type="region of interest" description="Disordered" evidence="3">
    <location>
        <begin position="170"/>
        <end position="240"/>
    </location>
</feature>
<feature type="coiled-coil region" evidence="2">
    <location>
        <begin position="154"/>
        <end position="223"/>
    </location>
</feature>
<feature type="compositionally biased region" description="Basic and acidic residues" evidence="3">
    <location>
        <begin position="170"/>
        <end position="187"/>
    </location>
</feature>
<feature type="compositionally biased region" description="Basic and acidic residues" evidence="3">
    <location>
        <begin position="194"/>
        <end position="203"/>
    </location>
</feature>
<feature type="compositionally biased region" description="Basic and acidic residues" evidence="3">
    <location>
        <begin position="218"/>
        <end position="237"/>
    </location>
</feature>
<dbReference type="EMBL" id="BC067310">
    <property type="protein sequence ID" value="AAH67310.1"/>
    <property type="molecule type" value="mRNA"/>
</dbReference>
<dbReference type="RefSeq" id="NP_001001205.1">
    <property type="nucleotide sequence ID" value="NM_001001205.1"/>
</dbReference>
<dbReference type="RefSeq" id="XP_017953180.1">
    <property type="nucleotide sequence ID" value="XM_018097691.1"/>
</dbReference>
<dbReference type="SMR" id="Q6NX28"/>
<dbReference type="FunCoup" id="Q6NX28">
    <property type="interactions" value="2137"/>
</dbReference>
<dbReference type="STRING" id="8364.ENSXETP00000041998"/>
<dbReference type="PaxDb" id="8364-ENSXETP00000014953"/>
<dbReference type="DNASU" id="407863"/>
<dbReference type="GeneID" id="407863"/>
<dbReference type="KEGG" id="xtr:407863"/>
<dbReference type="AGR" id="Xenbase:XB-GENE-963187"/>
<dbReference type="CTD" id="55379"/>
<dbReference type="Xenbase" id="XB-GENE-963187">
    <property type="gene designation" value="lrrc59"/>
</dbReference>
<dbReference type="eggNOG" id="KOG0473">
    <property type="taxonomic scope" value="Eukaryota"/>
</dbReference>
<dbReference type="HOGENOM" id="CLU_062247_1_0_1"/>
<dbReference type="InParanoid" id="Q6NX28"/>
<dbReference type="OMA" id="CASVNTI"/>
<dbReference type="OrthoDB" id="1394818at2759"/>
<dbReference type="PhylomeDB" id="Q6NX28"/>
<dbReference type="TreeFam" id="TF316929"/>
<dbReference type="Proteomes" id="UP000008143">
    <property type="component" value="Chromosome 10"/>
</dbReference>
<dbReference type="Bgee" id="ENSXETG00000006835">
    <property type="expression patterns" value="Expressed in neurula embryo and 12 other cell types or tissues"/>
</dbReference>
<dbReference type="GO" id="GO:0005789">
    <property type="term" value="C:endoplasmic reticulum membrane"/>
    <property type="evidence" value="ECO:0007669"/>
    <property type="project" value="UniProtKB-SubCell"/>
</dbReference>
<dbReference type="GO" id="GO:0005635">
    <property type="term" value="C:nuclear envelope"/>
    <property type="evidence" value="ECO:0007669"/>
    <property type="project" value="UniProtKB-SubCell"/>
</dbReference>
<dbReference type="FunFam" id="3.80.10.10:FF:000645">
    <property type="entry name" value="Leucine-rich repeat-containing protein 59"/>
    <property type="match status" value="1"/>
</dbReference>
<dbReference type="Gene3D" id="3.80.10.10">
    <property type="entry name" value="Ribonuclease Inhibitor"/>
    <property type="match status" value="1"/>
</dbReference>
<dbReference type="InterPro" id="IPR001611">
    <property type="entry name" value="Leu-rich_rpt"/>
</dbReference>
<dbReference type="InterPro" id="IPR003591">
    <property type="entry name" value="Leu-rich_rpt_typical-subtyp"/>
</dbReference>
<dbReference type="InterPro" id="IPR050715">
    <property type="entry name" value="LRR-SigEffector_domain"/>
</dbReference>
<dbReference type="InterPro" id="IPR032675">
    <property type="entry name" value="LRR_dom_sf"/>
</dbReference>
<dbReference type="PANTHER" id="PTHR45752">
    <property type="entry name" value="LEUCINE-RICH REPEAT-CONTAINING"/>
    <property type="match status" value="1"/>
</dbReference>
<dbReference type="PANTHER" id="PTHR45752:SF4">
    <property type="entry name" value="LEUCINE-RICH REPEAT-CONTAINING PROTEIN 59"/>
    <property type="match status" value="1"/>
</dbReference>
<dbReference type="Pfam" id="PF00560">
    <property type="entry name" value="LRR_1"/>
    <property type="match status" value="1"/>
</dbReference>
<dbReference type="Pfam" id="PF13855">
    <property type="entry name" value="LRR_8"/>
    <property type="match status" value="1"/>
</dbReference>
<dbReference type="SMART" id="SM00369">
    <property type="entry name" value="LRR_TYP"/>
    <property type="match status" value="4"/>
</dbReference>
<dbReference type="SUPFAM" id="SSF52058">
    <property type="entry name" value="L domain-like"/>
    <property type="match status" value="1"/>
</dbReference>
<reference key="1">
    <citation type="submission" date="2004-03" db="EMBL/GenBank/DDBJ databases">
        <authorList>
            <consortium name="NIH - Xenopus Gene Collection (XGC) project"/>
        </authorList>
    </citation>
    <scope>NUCLEOTIDE SEQUENCE [LARGE SCALE MRNA]</scope>
    <source>
        <tissue>Embryo</tissue>
    </source>
</reference>
<organism>
    <name type="scientific">Xenopus tropicalis</name>
    <name type="common">Western clawed frog</name>
    <name type="synonym">Silurana tropicalis</name>
    <dbReference type="NCBI Taxonomy" id="8364"/>
    <lineage>
        <taxon>Eukaryota</taxon>
        <taxon>Metazoa</taxon>
        <taxon>Chordata</taxon>
        <taxon>Craniata</taxon>
        <taxon>Vertebrata</taxon>
        <taxon>Euteleostomi</taxon>
        <taxon>Amphibia</taxon>
        <taxon>Batrachia</taxon>
        <taxon>Anura</taxon>
        <taxon>Pipoidea</taxon>
        <taxon>Pipidae</taxon>
        <taxon>Xenopodinae</taxon>
        <taxon>Xenopus</taxon>
        <taxon>Silurana</taxon>
    </lineage>
</organism>
<proteinExistence type="evidence at transcript level"/>
<keyword id="KW-0175">Coiled coil</keyword>
<keyword id="KW-0256">Endoplasmic reticulum</keyword>
<keyword id="KW-0433">Leucine-rich repeat</keyword>
<keyword id="KW-0472">Membrane</keyword>
<keyword id="KW-0492">Microsome</keyword>
<keyword id="KW-0539">Nucleus</keyword>
<keyword id="KW-1185">Reference proteome</keyword>
<keyword id="KW-0677">Repeat</keyword>
<keyword id="KW-0735">Signal-anchor</keyword>
<keyword id="KW-0812">Transmembrane</keyword>
<keyword id="KW-1133">Transmembrane helix</keyword>
<gene>
    <name type="primary">lrrc59</name>
</gene>
<comment type="function">
    <text evidence="1">Required for nuclear import of FGF1.</text>
</comment>
<comment type="subunit">
    <text evidence="1">Interacts with SGO1.</text>
</comment>
<comment type="subcellular location">
    <subcellularLocation>
        <location evidence="1">Microsome membrane</location>
        <topology evidence="1">Single-pass type II membrane protein</topology>
    </subcellularLocation>
    <subcellularLocation>
        <location evidence="1">Endoplasmic reticulum membrane</location>
        <topology evidence="1">Single-pass type II membrane protein</topology>
    </subcellularLocation>
    <subcellularLocation>
        <location evidence="1">Nucleus envelope</location>
    </subcellularLocation>
    <text evidence="1">Localization in the nuclear envelope depends upon the nuclear import machinery.</text>
</comment>
<evidence type="ECO:0000250" key="1"/>
<evidence type="ECO:0000255" key="2"/>
<evidence type="ECO:0000256" key="3">
    <source>
        <dbReference type="SAM" id="MobiDB-lite"/>
    </source>
</evidence>
<sequence>MARANGRSQNLRDKLDGNELDLSLSDLSEVPVRDLVAIPKATALDLSCNKLTSLPDDFCNLSYIVRLDLSKNQIAQLPSEFGRLVNLQHLDLLQNRIVALPVSFAQLKSLKWLDLKDNPLKPALAKVAGDCLDEKQCKECAQGVLQYMKSVQSDHERELQRKLQLDKDRKQRLEAQQRVKEEQDRELRKRMKQQQKERKRRDYNAMQEAQKALNNNKKKAEEEPSENHKPVPTPKEKKLARRQSRLRKIACILLFGLMVALLGVVACRFTDLKTFEVCRSVNAVYKETLSALHSNPVLERFLQDPSSQ</sequence>
<accession>Q6NX28</accession>
<protein>
    <recommendedName>
        <fullName>Leucine-rich repeat-containing protein 59</fullName>
    </recommendedName>
</protein>